<comment type="function">
    <text evidence="1">RNaseP catalyzes the removal of the 5'-leader sequence from pre-tRNA to produce the mature 5'-terminus. It can also cleave other RNA substrates such as 4.5S RNA. The protein component plays an auxiliary but essential role in vivo by binding to the 5'-leader sequence and broadening the substrate specificity of the ribozyme.</text>
</comment>
<comment type="catalytic activity">
    <reaction evidence="1">
        <text>Endonucleolytic cleavage of RNA, removing 5'-extranucleotides from tRNA precursor.</text>
        <dbReference type="EC" id="3.1.26.5"/>
    </reaction>
</comment>
<comment type="subunit">
    <text evidence="1">Consists of a catalytic RNA component (M1 or rnpB) and a protein subunit.</text>
</comment>
<comment type="similarity">
    <text evidence="1">Belongs to the RnpA family.</text>
</comment>
<protein>
    <recommendedName>
        <fullName evidence="1">Ribonuclease P protein component</fullName>
        <shortName evidence="1">RNase P protein</shortName>
        <shortName evidence="1">RNaseP protein</shortName>
        <ecNumber evidence="1">3.1.26.5</ecNumber>
    </recommendedName>
    <alternativeName>
        <fullName evidence="1">Protein C5</fullName>
    </alternativeName>
</protein>
<sequence>MKENKIRKNKEFRHVYRRGKSYSNRLLVLYICKNRCNINRLGVSVSKKVGKSVTRNRVKRLIKESYRLNLDKDMKQGYDLVFIARNSSNDKDYKDIESALINLLKKAGIYN</sequence>
<feature type="chain" id="PRO_1000100353" description="Ribonuclease P protein component">
    <location>
        <begin position="1"/>
        <end position="111"/>
    </location>
</feature>
<organism>
    <name type="scientific">Clostridium botulinum (strain Loch Maree / Type A3)</name>
    <dbReference type="NCBI Taxonomy" id="498214"/>
    <lineage>
        <taxon>Bacteria</taxon>
        <taxon>Bacillati</taxon>
        <taxon>Bacillota</taxon>
        <taxon>Clostridia</taxon>
        <taxon>Eubacteriales</taxon>
        <taxon>Clostridiaceae</taxon>
        <taxon>Clostridium</taxon>
    </lineage>
</organism>
<evidence type="ECO:0000255" key="1">
    <source>
        <dbReference type="HAMAP-Rule" id="MF_00227"/>
    </source>
</evidence>
<dbReference type="EC" id="3.1.26.5" evidence="1"/>
<dbReference type="EMBL" id="CP000962">
    <property type="protein sequence ID" value="ACA56525.1"/>
    <property type="molecule type" value="Genomic_DNA"/>
</dbReference>
<dbReference type="RefSeq" id="WP_012344384.1">
    <property type="nucleotide sequence ID" value="NC_010520.1"/>
</dbReference>
<dbReference type="SMR" id="B1KUB6"/>
<dbReference type="KEGG" id="cbl:CLK_3131"/>
<dbReference type="HOGENOM" id="CLU_117179_9_3_9"/>
<dbReference type="GO" id="GO:0030677">
    <property type="term" value="C:ribonuclease P complex"/>
    <property type="evidence" value="ECO:0007669"/>
    <property type="project" value="TreeGrafter"/>
</dbReference>
<dbReference type="GO" id="GO:0042781">
    <property type="term" value="F:3'-tRNA processing endoribonuclease activity"/>
    <property type="evidence" value="ECO:0007669"/>
    <property type="project" value="TreeGrafter"/>
</dbReference>
<dbReference type="GO" id="GO:0004526">
    <property type="term" value="F:ribonuclease P activity"/>
    <property type="evidence" value="ECO:0007669"/>
    <property type="project" value="UniProtKB-UniRule"/>
</dbReference>
<dbReference type="GO" id="GO:0000049">
    <property type="term" value="F:tRNA binding"/>
    <property type="evidence" value="ECO:0007669"/>
    <property type="project" value="UniProtKB-UniRule"/>
</dbReference>
<dbReference type="GO" id="GO:0001682">
    <property type="term" value="P:tRNA 5'-leader removal"/>
    <property type="evidence" value="ECO:0007669"/>
    <property type="project" value="UniProtKB-UniRule"/>
</dbReference>
<dbReference type="FunFam" id="3.30.230.10:FF:000106">
    <property type="entry name" value="Ribonuclease P protein component"/>
    <property type="match status" value="1"/>
</dbReference>
<dbReference type="Gene3D" id="3.30.230.10">
    <property type="match status" value="1"/>
</dbReference>
<dbReference type="HAMAP" id="MF_00227">
    <property type="entry name" value="RNase_P"/>
    <property type="match status" value="1"/>
</dbReference>
<dbReference type="InterPro" id="IPR020568">
    <property type="entry name" value="Ribosomal_Su5_D2-typ_SF"/>
</dbReference>
<dbReference type="InterPro" id="IPR014721">
    <property type="entry name" value="Ribsml_uS5_D2-typ_fold_subgr"/>
</dbReference>
<dbReference type="InterPro" id="IPR000100">
    <property type="entry name" value="RNase_P"/>
</dbReference>
<dbReference type="NCBIfam" id="TIGR00188">
    <property type="entry name" value="rnpA"/>
    <property type="match status" value="1"/>
</dbReference>
<dbReference type="PANTHER" id="PTHR33992">
    <property type="entry name" value="RIBONUCLEASE P PROTEIN COMPONENT"/>
    <property type="match status" value="1"/>
</dbReference>
<dbReference type="PANTHER" id="PTHR33992:SF1">
    <property type="entry name" value="RIBONUCLEASE P PROTEIN COMPONENT"/>
    <property type="match status" value="1"/>
</dbReference>
<dbReference type="Pfam" id="PF00825">
    <property type="entry name" value="Ribonuclease_P"/>
    <property type="match status" value="1"/>
</dbReference>
<dbReference type="SUPFAM" id="SSF54211">
    <property type="entry name" value="Ribosomal protein S5 domain 2-like"/>
    <property type="match status" value="1"/>
</dbReference>
<reference key="1">
    <citation type="journal article" date="2007" name="PLoS ONE">
        <title>Analysis of the neurotoxin complex genes in Clostridium botulinum A1-A4 and B1 strains: BoNT/A3, /Ba4 and /B1 clusters are located within plasmids.</title>
        <authorList>
            <person name="Smith T.J."/>
            <person name="Hill K.K."/>
            <person name="Foley B.T."/>
            <person name="Detter J.C."/>
            <person name="Munk A.C."/>
            <person name="Bruce D.C."/>
            <person name="Doggett N.A."/>
            <person name="Smith L.A."/>
            <person name="Marks J.D."/>
            <person name="Xie G."/>
            <person name="Brettin T.S."/>
        </authorList>
    </citation>
    <scope>NUCLEOTIDE SEQUENCE [LARGE SCALE GENOMIC DNA]</scope>
    <source>
        <strain>Loch Maree / Type A3</strain>
    </source>
</reference>
<accession>B1KUB6</accession>
<proteinExistence type="inferred from homology"/>
<keyword id="KW-0255">Endonuclease</keyword>
<keyword id="KW-0378">Hydrolase</keyword>
<keyword id="KW-0540">Nuclease</keyword>
<keyword id="KW-0694">RNA-binding</keyword>
<keyword id="KW-0819">tRNA processing</keyword>
<gene>
    <name evidence="1" type="primary">rnpA</name>
    <name type="ordered locus">CLK_3131</name>
</gene>
<name>RNPA_CLOBM</name>